<keyword id="KW-0030">Aminoacyl-tRNA synthetase</keyword>
<keyword id="KW-0067">ATP-binding</keyword>
<keyword id="KW-0963">Cytoplasm</keyword>
<keyword id="KW-0436">Ligase</keyword>
<keyword id="KW-0547">Nucleotide-binding</keyword>
<keyword id="KW-0648">Protein biosynthesis</keyword>
<keyword id="KW-1185">Reference proteome</keyword>
<organism>
    <name type="scientific">Arthrobacter sp. (strain FB24)</name>
    <dbReference type="NCBI Taxonomy" id="290399"/>
    <lineage>
        <taxon>Bacteria</taxon>
        <taxon>Bacillati</taxon>
        <taxon>Actinomycetota</taxon>
        <taxon>Actinomycetes</taxon>
        <taxon>Micrococcales</taxon>
        <taxon>Micrococcaceae</taxon>
        <taxon>Arthrobacter</taxon>
    </lineage>
</organism>
<name>SYP_ARTS2</name>
<reference key="1">
    <citation type="journal article" date="2013" name="Stand. Genomic Sci.">
        <title>Complete genome sequence of Arthrobacter sp. strain FB24.</title>
        <authorList>
            <person name="Nakatsu C.H."/>
            <person name="Barabote R."/>
            <person name="Thompson S."/>
            <person name="Bruce D."/>
            <person name="Detter C."/>
            <person name="Brettin T."/>
            <person name="Han C."/>
            <person name="Beasley F."/>
            <person name="Chen W."/>
            <person name="Konopka A."/>
            <person name="Xie G."/>
        </authorList>
    </citation>
    <scope>NUCLEOTIDE SEQUENCE [LARGE SCALE GENOMIC DNA]</scope>
    <source>
        <strain>FB24</strain>
    </source>
</reference>
<sequence length="603" mass="64928">MVLRLSKLFLRTLREDPADAEVASHRLLVRAGYIRRAAPGIYTWLPLGLSVLRKVEKVIREEMAAIGAQEVHFPALLPKEPYEATNRWTEYGEGIFRLKDRKGGDYLLAPTHEEMFTLLVKDLYSSYKDLPLSIYQIQNKYRDEARPRAGLLRGREFIMKDSYSFDVDDAGLDASYNAHRAAYLKIFERLGLEVIPVAATAGAMGGSRSEEFLHPTEIGEDTFVRSAGGYAANVEAVTTVVPAEIDFSNAPAAEIRDTPNTPTIDTLVDAANQLVPRDENDGGAWTAADTLKNVVLAVTLPTGERQIVVIGVPGDRGVDLKRVEANIGAYLPVAGEITVEAAGEEDLARNPLIVRGYLGPGMSLGTPLLGLEGAAKLLYLVDPRVVKGTAWVTGANMAGKHVFGLVAGRDFGWDGVIECTEVRAGDEAPDGSGPLETARGIEMGHIFQLGRKYAEALELKVLDQNGKQVVVTMGSYGVGVTRAVAALAESNHDAKGLVWPRAVAPADVHVVAVGRGEEIFAAAEQLSLELEAAGLEVIYDDRPKVSPGVKFGDAELIGVPTILAVGRGLVDGVVEIKDRRSGEAENVAVEKAVDYVVNAVRSK</sequence>
<dbReference type="EC" id="6.1.1.15" evidence="1"/>
<dbReference type="EMBL" id="CP000454">
    <property type="protein sequence ID" value="ABK02801.1"/>
    <property type="molecule type" value="Genomic_DNA"/>
</dbReference>
<dbReference type="RefSeq" id="WP_011691268.1">
    <property type="nucleotide sequence ID" value="NC_008541.1"/>
</dbReference>
<dbReference type="SMR" id="A0JUT1"/>
<dbReference type="STRING" id="290399.Arth_1407"/>
<dbReference type="KEGG" id="art:Arth_1407"/>
<dbReference type="eggNOG" id="COG0442">
    <property type="taxonomic scope" value="Bacteria"/>
</dbReference>
<dbReference type="HOGENOM" id="CLU_016739_0_0_11"/>
<dbReference type="OrthoDB" id="9809052at2"/>
<dbReference type="Proteomes" id="UP000000754">
    <property type="component" value="Chromosome"/>
</dbReference>
<dbReference type="GO" id="GO:0005829">
    <property type="term" value="C:cytosol"/>
    <property type="evidence" value="ECO:0007669"/>
    <property type="project" value="TreeGrafter"/>
</dbReference>
<dbReference type="GO" id="GO:0002161">
    <property type="term" value="F:aminoacyl-tRNA deacylase activity"/>
    <property type="evidence" value="ECO:0007669"/>
    <property type="project" value="InterPro"/>
</dbReference>
<dbReference type="GO" id="GO:0005524">
    <property type="term" value="F:ATP binding"/>
    <property type="evidence" value="ECO:0007669"/>
    <property type="project" value="UniProtKB-UniRule"/>
</dbReference>
<dbReference type="GO" id="GO:0004827">
    <property type="term" value="F:proline-tRNA ligase activity"/>
    <property type="evidence" value="ECO:0007669"/>
    <property type="project" value="UniProtKB-UniRule"/>
</dbReference>
<dbReference type="GO" id="GO:0006433">
    <property type="term" value="P:prolyl-tRNA aminoacylation"/>
    <property type="evidence" value="ECO:0007669"/>
    <property type="project" value="UniProtKB-UniRule"/>
</dbReference>
<dbReference type="CDD" id="cd00861">
    <property type="entry name" value="ProRS_anticodon_short"/>
    <property type="match status" value="1"/>
</dbReference>
<dbReference type="CDD" id="cd00779">
    <property type="entry name" value="ProRS_core_prok"/>
    <property type="match status" value="1"/>
</dbReference>
<dbReference type="FunFam" id="3.30.930.10:FF:000065">
    <property type="entry name" value="Proline--tRNA ligase"/>
    <property type="match status" value="1"/>
</dbReference>
<dbReference type="FunFam" id="3.30.930.10:FF:000066">
    <property type="entry name" value="Proline--tRNA ligase"/>
    <property type="match status" value="1"/>
</dbReference>
<dbReference type="Gene3D" id="3.40.50.800">
    <property type="entry name" value="Anticodon-binding domain"/>
    <property type="match status" value="1"/>
</dbReference>
<dbReference type="Gene3D" id="3.30.930.10">
    <property type="entry name" value="Bira Bifunctional Protein, Domain 2"/>
    <property type="match status" value="2"/>
</dbReference>
<dbReference type="HAMAP" id="MF_01569">
    <property type="entry name" value="Pro_tRNA_synth_type1"/>
    <property type="match status" value="1"/>
</dbReference>
<dbReference type="InterPro" id="IPR002314">
    <property type="entry name" value="aa-tRNA-synt_IIb"/>
</dbReference>
<dbReference type="InterPro" id="IPR006195">
    <property type="entry name" value="aa-tRNA-synth_II"/>
</dbReference>
<dbReference type="InterPro" id="IPR045864">
    <property type="entry name" value="aa-tRNA-synth_II/BPL/LPL"/>
</dbReference>
<dbReference type="InterPro" id="IPR004154">
    <property type="entry name" value="Anticodon-bd"/>
</dbReference>
<dbReference type="InterPro" id="IPR036621">
    <property type="entry name" value="Anticodon-bd_dom_sf"/>
</dbReference>
<dbReference type="InterPro" id="IPR002316">
    <property type="entry name" value="Pro-tRNA-ligase_IIa"/>
</dbReference>
<dbReference type="InterPro" id="IPR004500">
    <property type="entry name" value="Pro-tRNA-synth_IIa_bac-type"/>
</dbReference>
<dbReference type="InterPro" id="IPR023717">
    <property type="entry name" value="Pro-tRNA-Synthase_IIa_type1"/>
</dbReference>
<dbReference type="InterPro" id="IPR050062">
    <property type="entry name" value="Pro-tRNA_synthetase"/>
</dbReference>
<dbReference type="InterPro" id="IPR044140">
    <property type="entry name" value="ProRS_anticodon_short"/>
</dbReference>
<dbReference type="InterPro" id="IPR033730">
    <property type="entry name" value="ProRS_core_prok"/>
</dbReference>
<dbReference type="InterPro" id="IPR007214">
    <property type="entry name" value="YbaK/aa-tRNA-synth-assoc-dom"/>
</dbReference>
<dbReference type="NCBIfam" id="NF006625">
    <property type="entry name" value="PRK09194.1"/>
    <property type="match status" value="1"/>
</dbReference>
<dbReference type="NCBIfam" id="TIGR00409">
    <property type="entry name" value="proS_fam_II"/>
    <property type="match status" value="1"/>
</dbReference>
<dbReference type="PANTHER" id="PTHR42753">
    <property type="entry name" value="MITOCHONDRIAL RIBOSOME PROTEIN L39/PROLYL-TRNA LIGASE FAMILY MEMBER"/>
    <property type="match status" value="1"/>
</dbReference>
<dbReference type="PANTHER" id="PTHR42753:SF2">
    <property type="entry name" value="PROLINE--TRNA LIGASE"/>
    <property type="match status" value="1"/>
</dbReference>
<dbReference type="Pfam" id="PF03129">
    <property type="entry name" value="HGTP_anticodon"/>
    <property type="match status" value="1"/>
</dbReference>
<dbReference type="Pfam" id="PF00587">
    <property type="entry name" value="tRNA-synt_2b"/>
    <property type="match status" value="1"/>
</dbReference>
<dbReference type="Pfam" id="PF04073">
    <property type="entry name" value="tRNA_edit"/>
    <property type="match status" value="1"/>
</dbReference>
<dbReference type="PRINTS" id="PR01046">
    <property type="entry name" value="TRNASYNTHPRO"/>
</dbReference>
<dbReference type="SUPFAM" id="SSF52954">
    <property type="entry name" value="Class II aaRS ABD-related"/>
    <property type="match status" value="1"/>
</dbReference>
<dbReference type="SUPFAM" id="SSF55681">
    <property type="entry name" value="Class II aaRS and biotin synthetases"/>
    <property type="match status" value="1"/>
</dbReference>
<dbReference type="PROSITE" id="PS50862">
    <property type="entry name" value="AA_TRNA_LIGASE_II"/>
    <property type="match status" value="1"/>
</dbReference>
<proteinExistence type="inferred from homology"/>
<accession>A0JUT1</accession>
<evidence type="ECO:0000255" key="1">
    <source>
        <dbReference type="HAMAP-Rule" id="MF_01569"/>
    </source>
</evidence>
<gene>
    <name evidence="1" type="primary">proS</name>
    <name type="ordered locus">Arth_1407</name>
</gene>
<feature type="chain" id="PRO_0000288310" description="Proline--tRNA ligase">
    <location>
        <begin position="1"/>
        <end position="603"/>
    </location>
</feature>
<comment type="function">
    <text evidence="1">Catalyzes the attachment of proline to tRNA(Pro) in a two-step reaction: proline is first activated by ATP to form Pro-AMP and then transferred to the acceptor end of tRNA(Pro). As ProRS can inadvertently accommodate and process non-cognate amino acids such as alanine and cysteine, to avoid such errors it has two additional distinct editing activities against alanine. One activity is designated as 'pretransfer' editing and involves the tRNA(Pro)-independent hydrolysis of activated Ala-AMP. The other activity is designated 'posttransfer' editing and involves deacylation of mischarged Ala-tRNA(Pro). The misacylated Cys-tRNA(Pro) is not edited by ProRS.</text>
</comment>
<comment type="catalytic activity">
    <reaction evidence="1">
        <text>tRNA(Pro) + L-proline + ATP = L-prolyl-tRNA(Pro) + AMP + diphosphate</text>
        <dbReference type="Rhea" id="RHEA:14305"/>
        <dbReference type="Rhea" id="RHEA-COMP:9700"/>
        <dbReference type="Rhea" id="RHEA-COMP:9702"/>
        <dbReference type="ChEBI" id="CHEBI:30616"/>
        <dbReference type="ChEBI" id="CHEBI:33019"/>
        <dbReference type="ChEBI" id="CHEBI:60039"/>
        <dbReference type="ChEBI" id="CHEBI:78442"/>
        <dbReference type="ChEBI" id="CHEBI:78532"/>
        <dbReference type="ChEBI" id="CHEBI:456215"/>
        <dbReference type="EC" id="6.1.1.15"/>
    </reaction>
</comment>
<comment type="subunit">
    <text evidence="1">Homodimer.</text>
</comment>
<comment type="subcellular location">
    <subcellularLocation>
        <location evidence="1">Cytoplasm</location>
    </subcellularLocation>
</comment>
<comment type="domain">
    <text evidence="1">Consists of three domains: the N-terminal catalytic domain, the editing domain and the C-terminal anticodon-binding domain.</text>
</comment>
<comment type="similarity">
    <text evidence="1">Belongs to the class-II aminoacyl-tRNA synthetase family. ProS type 1 subfamily.</text>
</comment>
<protein>
    <recommendedName>
        <fullName evidence="1">Proline--tRNA ligase</fullName>
        <ecNumber evidence="1">6.1.1.15</ecNumber>
    </recommendedName>
    <alternativeName>
        <fullName evidence="1">Prolyl-tRNA synthetase</fullName>
        <shortName evidence="1">ProRS</shortName>
    </alternativeName>
</protein>